<accession>C0HLK7</accession>
<comment type="miscellaneous">
    <text evidence="1 2">Induces proliferation of human neuroblastoma cells but not of human colonic epithelial cells or human adrenal carcinoma cells (PubMed:24796676). Also increases proliferation of mouse neural stem cells (PubMed:26215270). In human neuroblastoma cells and mouse neural stem cells, inhibits apoptosis induced by the synthetic neurotoxic compound 6-hydroxydopamine (6-OHDA) (PubMed:24796676). In human neuroblastoma cells and mouse neural stem cells, increases ubiquitination of cyclin-dependent kinase inhibitor CDKN1B, promoting its degradation (PubMed:24796676, PubMed:26215270). Attenuates motor impairments in 6-OHDA-treated mice (PubMed:26215270).</text>
</comment>
<evidence type="ECO:0000269" key="1">
    <source>
    </source>
</evidence>
<evidence type="ECO:0000269" key="2">
    <source>
    </source>
</evidence>
<evidence type="ECO:0000303" key="3">
    <source>
    </source>
</evidence>
<evidence type="ECO:0000305" key="4"/>
<protein>
    <recommendedName>
        <fullName evidence="3">Lumbricusin</fullName>
    </recommendedName>
</protein>
<organism>
    <name type="scientific">Lumbricus terrestris</name>
    <name type="common">Common earthworm</name>
    <dbReference type="NCBI Taxonomy" id="6398"/>
    <lineage>
        <taxon>Eukaryota</taxon>
        <taxon>Metazoa</taxon>
        <taxon>Spiralia</taxon>
        <taxon>Lophotrochozoa</taxon>
        <taxon>Annelida</taxon>
        <taxon>Clitellata</taxon>
        <taxon>Oligochaeta</taxon>
        <taxon>Crassiclitellata</taxon>
        <taxon>Lumbricina</taxon>
        <taxon>Lumbricidae</taxon>
        <taxon>Lumbricinae</taxon>
        <taxon>Lumbricus</taxon>
    </lineage>
</organism>
<sequence length="11" mass="1446">RNRRWCIDQQA</sequence>
<name>LMCSN_LUMTE</name>
<keyword id="KW-0903">Direct protein sequencing</keyword>
<feature type="peptide" id="PRO_0000447646" description="Lumbricusin" evidence="1">
    <location>
        <begin position="1"/>
        <end position="11"/>
    </location>
</feature>
<reference evidence="4" key="1">
    <citation type="journal article" date="2014" name="Biochem. Biophys. Res. Commun.">
        <title>Neurotropic and neuroprotective activities of the earthworm peptide Lumbricusin.</title>
        <authorList>
            <person name="Kim D.H."/>
            <person name="Lee I.H."/>
            <person name="Nam S.T."/>
            <person name="Hong J."/>
            <person name="Zhang P."/>
            <person name="Hwang J.S."/>
            <person name="Seok H."/>
            <person name="Choi H."/>
            <person name="Lee D.G."/>
            <person name="Kim J.I."/>
            <person name="Kim H."/>
        </authorList>
    </citation>
    <scope>PROTEIN SEQUENCE</scope>
    <scope>SYNTHESIS</scope>
</reference>
<reference evidence="4" key="2">
    <citation type="journal article" date="2015" name="J. Microbiol. Biotechnol.">
        <title>Antimicrobial peptide, Lumbricusin, ameliorates motor dysfunction and dopaminergic neurodegeneration in a mouse model of Parkinson's Disease.</title>
        <authorList>
            <person name="Kim D.H."/>
            <person name="Lee I.H."/>
            <person name="Nam S.T."/>
            <person name="Hong J."/>
            <person name="Zhang P."/>
            <person name="Lu L.F."/>
            <person name="Hwang J.S."/>
            <person name="Park K.C."/>
            <person name="Kim H."/>
        </authorList>
    </citation>
    <scope>SYNTHESIS</scope>
</reference>
<proteinExistence type="evidence at protein level"/>